<comment type="similarity">
    <text evidence="1">Belongs to the SlyX family.</text>
</comment>
<accession>B2SC52</accession>
<evidence type="ECO:0000255" key="1">
    <source>
        <dbReference type="HAMAP-Rule" id="MF_00715"/>
    </source>
</evidence>
<proteinExistence type="inferred from homology"/>
<gene>
    <name evidence="1" type="primary">slyX</name>
    <name type="ordered locus">BAbS19_II09560</name>
</gene>
<name>SLYX_BRUA1</name>
<reference key="1">
    <citation type="journal article" date="2008" name="PLoS ONE">
        <title>Genome sequence of Brucella abortus vaccine strain S19 compared to virulent strains yields candidate virulence genes.</title>
        <authorList>
            <person name="Crasta O.R."/>
            <person name="Folkerts O."/>
            <person name="Fei Z."/>
            <person name="Mane S.P."/>
            <person name="Evans C."/>
            <person name="Martino-Catt S."/>
            <person name="Bricker B."/>
            <person name="Yu G."/>
            <person name="Du L."/>
            <person name="Sobral B.W."/>
        </authorList>
    </citation>
    <scope>NUCLEOTIDE SEQUENCE [LARGE SCALE GENOMIC DNA]</scope>
    <source>
        <strain>S19</strain>
    </source>
</reference>
<dbReference type="EMBL" id="CP000888">
    <property type="protein sequence ID" value="ACD74439.1"/>
    <property type="molecule type" value="Genomic_DNA"/>
</dbReference>
<dbReference type="RefSeq" id="WP_002965586.1">
    <property type="nucleotide sequence ID" value="NC_010740.1"/>
</dbReference>
<dbReference type="SMR" id="B2SC52"/>
<dbReference type="KEGG" id="bmc:BAbS19_II09560"/>
<dbReference type="HOGENOM" id="CLU_180796_5_0_5"/>
<dbReference type="Proteomes" id="UP000002565">
    <property type="component" value="Chromosome 2"/>
</dbReference>
<dbReference type="Gene3D" id="1.20.5.300">
    <property type="match status" value="1"/>
</dbReference>
<dbReference type="HAMAP" id="MF_00715">
    <property type="entry name" value="SlyX"/>
    <property type="match status" value="1"/>
</dbReference>
<dbReference type="InterPro" id="IPR007236">
    <property type="entry name" value="SlyX"/>
</dbReference>
<dbReference type="NCBIfam" id="NF001962">
    <property type="entry name" value="PRK00736.1"/>
    <property type="match status" value="1"/>
</dbReference>
<dbReference type="PANTHER" id="PTHR36508">
    <property type="entry name" value="PROTEIN SLYX"/>
    <property type="match status" value="1"/>
</dbReference>
<dbReference type="PANTHER" id="PTHR36508:SF1">
    <property type="entry name" value="PROTEIN SLYX"/>
    <property type="match status" value="1"/>
</dbReference>
<dbReference type="Pfam" id="PF04102">
    <property type="entry name" value="SlyX"/>
    <property type="match status" value="1"/>
</dbReference>
<sequence length="68" mass="7873">MSAEERLIELEIRVAEQEKTIDELSSVLTEQWKTVDQLSKKLNALTNRFLELEEQAAPDVPVTKPPHW</sequence>
<feature type="chain" id="PRO_1000195830" description="Protein SlyX homolog">
    <location>
        <begin position="1"/>
        <end position="68"/>
    </location>
</feature>
<protein>
    <recommendedName>
        <fullName evidence="1">Protein SlyX homolog</fullName>
    </recommendedName>
</protein>
<organism>
    <name type="scientific">Brucella abortus (strain S19)</name>
    <dbReference type="NCBI Taxonomy" id="430066"/>
    <lineage>
        <taxon>Bacteria</taxon>
        <taxon>Pseudomonadati</taxon>
        <taxon>Pseudomonadota</taxon>
        <taxon>Alphaproteobacteria</taxon>
        <taxon>Hyphomicrobiales</taxon>
        <taxon>Brucellaceae</taxon>
        <taxon>Brucella/Ochrobactrum group</taxon>
        <taxon>Brucella</taxon>
    </lineage>
</organism>